<evidence type="ECO:0000250" key="1"/>
<evidence type="ECO:0000256" key="2">
    <source>
        <dbReference type="SAM" id="MobiDB-lite"/>
    </source>
</evidence>
<evidence type="ECO:0000305" key="3"/>
<keyword id="KW-0167">Capsid protein</keyword>
<keyword id="KW-1048">Host nucleus</keyword>
<keyword id="KW-0945">Host-virus interaction</keyword>
<keyword id="KW-0426">Late protein</keyword>
<keyword id="KW-1233">Viral attachment to host adhesion receptor</keyword>
<keyword id="KW-1161">Viral attachment to host cell</keyword>
<keyword id="KW-0946">Virion</keyword>
<keyword id="KW-1160">Virus entry into host cell</keyword>
<comment type="function">
    <text evidence="1">Forms spikes that protrude from each vertex of the icosahedral capsid. Interacts with host receptor to provide virion initial attachment to target cell. Fiber proteins are shed during virus entry, when virus is still at the cell surface (By similarity).</text>
</comment>
<comment type="subunit">
    <text evidence="1">Homotrimer. Interacts (via N-terminal tail region) with pentons (By similarity).</text>
</comment>
<comment type="subcellular location">
    <subcellularLocation>
        <location evidence="1">Virion</location>
    </subcellularLocation>
    <subcellularLocation>
        <location evidence="1">Host nucleus</location>
    </subcellularLocation>
    <text evidence="1">Anchored to the pentons, protrudes from the virion surface.</text>
</comment>
<comment type="induction">
    <text>Expressed in the late phase of the viral replicative cycle.</text>
</comment>
<comment type="domain">
    <text evidence="1">The tail region anchors the fiber to penton base capsomers, whereas the shaft, built from several repeated motifs, allows the knob to protrude from the virion.</text>
</comment>
<comment type="miscellaneous">
    <text evidence="1">All late proteins expressed from the major late promoter are produced by alternative splicing and alternative polyadenylation of the same gene giving rise to non-overlapping ORFs. A leader sequence is present in the N-terminus of all these mRNAs and is recognized by the viral shutoff protein to provide expression although conventional translation via ribosome scanning from the cap has been shut off in the host cell (By similarity).</text>
</comment>
<comment type="similarity">
    <text evidence="3">Belongs to the adenoviridae fiber family.</text>
</comment>
<dbReference type="EMBL" id="Y07760">
    <property type="protein sequence ID" value="CAA69045.1"/>
    <property type="molecule type" value="Genomic_DNA"/>
</dbReference>
<dbReference type="RefSeq" id="AP_000069.1">
    <property type="nucleotide sequence ID" value="AC_000003.1"/>
</dbReference>
<dbReference type="SMR" id="Q96689"/>
<dbReference type="KEGG" id="vg:1488941"/>
<dbReference type="Proteomes" id="UP000126130">
    <property type="component" value="Segment"/>
</dbReference>
<dbReference type="GO" id="GO:0042025">
    <property type="term" value="C:host cell nucleus"/>
    <property type="evidence" value="ECO:0007669"/>
    <property type="project" value="UniProtKB-SubCell"/>
</dbReference>
<dbReference type="GO" id="GO:0019028">
    <property type="term" value="C:viral capsid"/>
    <property type="evidence" value="ECO:0007669"/>
    <property type="project" value="UniProtKB-KW"/>
</dbReference>
<dbReference type="GO" id="GO:0098671">
    <property type="term" value="P:adhesion receptor-mediated virion attachment to host cell"/>
    <property type="evidence" value="ECO:0007669"/>
    <property type="project" value="UniProtKB-KW"/>
</dbReference>
<dbReference type="GO" id="GO:0007155">
    <property type="term" value="P:cell adhesion"/>
    <property type="evidence" value="ECO:0007669"/>
    <property type="project" value="InterPro"/>
</dbReference>
<dbReference type="GO" id="GO:0046718">
    <property type="term" value="P:symbiont entry into host cell"/>
    <property type="evidence" value="ECO:0007669"/>
    <property type="project" value="UniProtKB-KW"/>
</dbReference>
<dbReference type="Gene3D" id="6.20.10.20">
    <property type="match status" value="1"/>
</dbReference>
<dbReference type="Gene3D" id="2.60.90.10">
    <property type="entry name" value="Adenovirus pIV-related, attachment domain"/>
    <property type="match status" value="1"/>
</dbReference>
<dbReference type="Gene3D" id="2.10.25.20">
    <property type="entry name" value="reovirus attachment protein sigma1, domain 1"/>
    <property type="match status" value="3"/>
</dbReference>
<dbReference type="InterPro" id="IPR000931">
    <property type="entry name" value="Adeno_fibre"/>
</dbReference>
<dbReference type="InterPro" id="IPR000978">
    <property type="entry name" value="Adeno_fibre_knob"/>
</dbReference>
<dbReference type="InterPro" id="IPR000939">
    <property type="entry name" value="Adenobir_fibre_prot_rpt/shaft"/>
</dbReference>
<dbReference type="InterPro" id="IPR008982">
    <property type="entry name" value="Adenovirus_pIV-like_att"/>
</dbReference>
<dbReference type="InterPro" id="IPR009013">
    <property type="entry name" value="Attachment_protein_shaft_sf"/>
</dbReference>
<dbReference type="Pfam" id="PF00541">
    <property type="entry name" value="Adeno_knob"/>
    <property type="match status" value="1"/>
</dbReference>
<dbReference type="Pfam" id="PF00608">
    <property type="entry name" value="Adeno_shaft"/>
    <property type="match status" value="7"/>
</dbReference>
<dbReference type="PRINTS" id="PR00307">
    <property type="entry name" value="ADENOVSFIBRE"/>
</dbReference>
<dbReference type="SUPFAM" id="SSF51225">
    <property type="entry name" value="Fibre shaft of virus attachment proteins"/>
    <property type="match status" value="3"/>
</dbReference>
<dbReference type="SUPFAM" id="SSF49835">
    <property type="entry name" value="Virus attachment protein globular domain"/>
    <property type="match status" value="1"/>
</dbReference>
<protein>
    <recommendedName>
        <fullName>Fiber protein</fullName>
        <shortName>SPIKE</shortName>
    </recommendedName>
    <alternativeName>
        <fullName>Protein IV</fullName>
    </alternativeName>
</protein>
<gene>
    <name type="ORF">L5</name>
</gene>
<accession>Q96689</accession>
<organism>
    <name type="scientific">Canine adenovirus serotype 1 (strain RI261)</name>
    <name type="common">CAdV-1</name>
    <name type="synonym">Canine adenovirus 1 (strain RI261)</name>
    <dbReference type="NCBI Taxonomy" id="69151"/>
    <lineage>
        <taxon>Viruses</taxon>
        <taxon>Varidnaviria</taxon>
        <taxon>Bamfordvirae</taxon>
        <taxon>Preplasmiviricota</taxon>
        <taxon>Tectiliviricetes</taxon>
        <taxon>Rowavirales</taxon>
        <taxon>Adenoviridae</taxon>
        <taxon>Mastadenovirus</taxon>
        <taxon>Canine mastadenovirus A</taxon>
    </lineage>
</organism>
<sequence>MKRTRSALPANFDPVYPYDAPKPSTQPPFFNDRKGLTESSPGTLAVNISPPLTFSNLGAIKLSTGAGLILKEGKLEANIGPGLTTNQEGQITVEKDSDGLTFTSPLHKIENTVSLSIGEGLEDESGTLKVNFPSPPPPLLFSPPLAEAGGTVSLPLQESMQVTEGKLGVKPTTYSPPLQKTDQQVSLRVGPGLTVLNGQLQAVQPPATTYKEPLLETENSVSLKVGAGLAVQDGALVATPPNVTFSAPLEKNGNAVSVRVGAGLSIQGNALVATTSPTLTFAYPLIKNNNHITLSAGSGLRVSGGSLTVATGPGLSHINGTIAAVIGAGLKFENNAILAKLGNGLTIRDGAIEAVAPQPSFTPVTLWTGPDPNVNTSINGTPVIRSFISLTRDSNLVTVNASFTGEGSYQSVSPTQSQFSLILEFNQFGQLMSTGNLNSTTTWGEKPWGNNTVQVQPSHTWKLCMPNREVYSTPAATLTSCGLNSIAHDGAPNRSIDCMLIINKLAGAATYTLTFRFLNFNKLSSSTVFKTDVLTFTYVGENQ</sequence>
<feature type="chain" id="PRO_0000221806" description="Fiber protein">
    <location>
        <begin position="1"/>
        <end position="543"/>
    </location>
</feature>
<feature type="region of interest" description="Disordered" evidence="2">
    <location>
        <begin position="1"/>
        <end position="36"/>
    </location>
</feature>
<organismHost>
    <name type="scientific">Canis lupus familiaris</name>
    <name type="common">Dog</name>
    <name type="synonym">Canis familiaris</name>
    <dbReference type="NCBI Taxonomy" id="9615"/>
</organismHost>
<proteinExistence type="evidence at transcript level"/>
<reference key="1">
    <citation type="journal article" date="1997" name="J. Gen. Virol.">
        <title>Complete DNA sequence of canine adenovirus type 1.</title>
        <authorList>
            <person name="Morrison M.D."/>
            <person name="Onions D.E."/>
            <person name="Nicolson L."/>
        </authorList>
    </citation>
    <scope>NUCLEOTIDE SEQUENCE [LARGE SCALE GENOMIC DNA]</scope>
</reference>
<name>SPIKE_ADECR</name>